<organism>
    <name type="scientific">Arabidopsis thaliana</name>
    <name type="common">Mouse-ear cress</name>
    <dbReference type="NCBI Taxonomy" id="3702"/>
    <lineage>
        <taxon>Eukaryota</taxon>
        <taxon>Viridiplantae</taxon>
        <taxon>Streptophyta</taxon>
        <taxon>Embryophyta</taxon>
        <taxon>Tracheophyta</taxon>
        <taxon>Spermatophyta</taxon>
        <taxon>Magnoliopsida</taxon>
        <taxon>eudicotyledons</taxon>
        <taxon>Gunneridae</taxon>
        <taxon>Pentapetalae</taxon>
        <taxon>rosids</taxon>
        <taxon>malvids</taxon>
        <taxon>Brassicales</taxon>
        <taxon>Brassicaceae</taxon>
        <taxon>Camelineae</taxon>
        <taxon>Arabidopsis</taxon>
    </lineage>
</organism>
<sequence>MAKENSGHHHQTEARRKKLTLILGVSGLCILFYVLGAWQANTVPSSISKLGCETQSNPSSSSSSSSSSESAELDFKSHNQIELKETNQTIKYFEPCELSLSEYTPCEDRQRGRRFDRNMMKYRERHCPVKDELLYCLIPPPPNYKIPFKWPQSRDYAWYDNIPHKELSVEKAVQNWIQVEGDRFRFPGGGTMFPRGADAYIDDIARLIPLTDGGIRTAIDTGCGVASFGAYLLKRDIMAVSFAPRDTHEAQVQFALERGVPAIIGIMGSRRLPYPARAFDLAHCSRCLIPWFKNDGLYLMEVDRVLRPGGYWILSGPPINWKQYWRGWERTEEDLKKEQDSIEDVAKSLCWKKVTEKGDLSIWQKPLNHIECKKLKQNNKSPPICSSDNADSAWYKDLETCITPLPETNNPDDSAGGALEDWPDRAFAVPPRIIRGTIPEMNAEKFREDNEVWKERIAHYKKIVPELSHGRFRNIMDMNAFLGGFAASMLKYPSWVMNVVPVDAEKQTLGVIYERGLIGTYQDWCEGFSTYPRTYDMIHAGGLFSLYEHRCDLTLILLEMDRILRPEGTVVLRDNVETLNKVEKIVKGMKWKSQIVDHEKGPFNPEKILVAVKTYWTGQPSDKNNNNNNNNNN</sequence>
<dbReference type="EC" id="2.1.1.-"/>
<dbReference type="EMBL" id="AL049524">
    <property type="protein sequence ID" value="CAB40037.1"/>
    <property type="molecule type" value="Genomic_DNA"/>
</dbReference>
<dbReference type="EMBL" id="AL161517">
    <property type="protein sequence ID" value="CAB78167.1"/>
    <property type="molecule type" value="Genomic_DNA"/>
</dbReference>
<dbReference type="EMBL" id="CP002687">
    <property type="protein sequence ID" value="AEE82883.1"/>
    <property type="molecule type" value="Genomic_DNA"/>
</dbReference>
<dbReference type="PIR" id="T04179">
    <property type="entry name" value="T04179"/>
</dbReference>
<dbReference type="RefSeq" id="NP_192782.1">
    <property type="nucleotide sequence ID" value="NM_117112.2"/>
</dbReference>
<dbReference type="FunCoup" id="Q9SZX8">
    <property type="interactions" value="46"/>
</dbReference>
<dbReference type="STRING" id="3702.Q9SZX8"/>
<dbReference type="GlyGen" id="Q9SZX8">
    <property type="glycosylation" value="1 site"/>
</dbReference>
<dbReference type="PaxDb" id="3702-AT4G10440.1"/>
<dbReference type="ProteomicsDB" id="226154"/>
<dbReference type="EnsemblPlants" id="AT4G10440.1">
    <property type="protein sequence ID" value="AT4G10440.1"/>
    <property type="gene ID" value="AT4G10440"/>
</dbReference>
<dbReference type="GeneID" id="826636"/>
<dbReference type="Gramene" id="AT4G10440.1">
    <property type="protein sequence ID" value="AT4G10440.1"/>
    <property type="gene ID" value="AT4G10440"/>
</dbReference>
<dbReference type="KEGG" id="ath:AT4G10440"/>
<dbReference type="Araport" id="AT4G10440"/>
<dbReference type="TAIR" id="AT4G10440"/>
<dbReference type="eggNOG" id="ENOG502QRZJ">
    <property type="taxonomic scope" value="Eukaryota"/>
</dbReference>
<dbReference type="HOGENOM" id="CLU_010485_2_0_1"/>
<dbReference type="InParanoid" id="Q9SZX8"/>
<dbReference type="OMA" id="INHVECL"/>
<dbReference type="PhylomeDB" id="Q9SZX8"/>
<dbReference type="PRO" id="PR:Q9SZX8"/>
<dbReference type="Proteomes" id="UP000006548">
    <property type="component" value="Chromosome 4"/>
</dbReference>
<dbReference type="ExpressionAtlas" id="Q9SZX8">
    <property type="expression patterns" value="baseline and differential"/>
</dbReference>
<dbReference type="GO" id="GO:0005829">
    <property type="term" value="C:cytosol"/>
    <property type="evidence" value="ECO:0007005"/>
    <property type="project" value="TAIR"/>
</dbReference>
<dbReference type="GO" id="GO:0005789">
    <property type="term" value="C:endoplasmic reticulum membrane"/>
    <property type="evidence" value="ECO:0007669"/>
    <property type="project" value="UniProtKB-SubCell"/>
</dbReference>
<dbReference type="GO" id="GO:0008168">
    <property type="term" value="F:methyltransferase activity"/>
    <property type="evidence" value="ECO:0007669"/>
    <property type="project" value="UniProtKB-KW"/>
</dbReference>
<dbReference type="GO" id="GO:0032259">
    <property type="term" value="P:methylation"/>
    <property type="evidence" value="ECO:0007669"/>
    <property type="project" value="UniProtKB-KW"/>
</dbReference>
<dbReference type="FunFam" id="3.40.50.150:FF:000123">
    <property type="entry name" value="Putative methyltransferase PMT15"/>
    <property type="match status" value="1"/>
</dbReference>
<dbReference type="Gene3D" id="3.40.50.150">
    <property type="entry name" value="Vaccinia Virus protein VP39"/>
    <property type="match status" value="1"/>
</dbReference>
<dbReference type="InterPro" id="IPR004159">
    <property type="entry name" value="Put_SAM_MeTrfase"/>
</dbReference>
<dbReference type="InterPro" id="IPR029063">
    <property type="entry name" value="SAM-dependent_MTases_sf"/>
</dbReference>
<dbReference type="PANTHER" id="PTHR10108:SF1069">
    <property type="entry name" value="METHYLTRANSFERASE PMT17-RELATED"/>
    <property type="match status" value="1"/>
</dbReference>
<dbReference type="PANTHER" id="PTHR10108">
    <property type="entry name" value="SAM-DEPENDENT METHYLTRANSFERASE"/>
    <property type="match status" value="1"/>
</dbReference>
<dbReference type="Pfam" id="PF03141">
    <property type="entry name" value="Methyltransf_29"/>
    <property type="match status" value="1"/>
</dbReference>
<dbReference type="SUPFAM" id="SSF53335">
    <property type="entry name" value="S-adenosyl-L-methionine-dependent methyltransferases"/>
    <property type="match status" value="2"/>
</dbReference>
<proteinExistence type="inferred from homology"/>
<feature type="chain" id="PRO_0000393257" description="Probable methyltransferase PMT17">
    <location>
        <begin position="1"/>
        <end position="633"/>
    </location>
</feature>
<feature type="topological domain" description="Cytoplasmic" evidence="1">
    <location>
        <begin position="1"/>
        <end position="18"/>
    </location>
</feature>
<feature type="transmembrane region" description="Helical; Signal-anchor for type II membrane protein" evidence="1">
    <location>
        <begin position="19"/>
        <end position="39"/>
    </location>
</feature>
<feature type="topological domain" description="Lumenal" evidence="1">
    <location>
        <begin position="40"/>
        <end position="633"/>
    </location>
</feature>
<feature type="region of interest" description="Disordered" evidence="2">
    <location>
        <begin position="50"/>
        <end position="71"/>
    </location>
</feature>
<feature type="compositionally biased region" description="Low complexity" evidence="2">
    <location>
        <begin position="59"/>
        <end position="70"/>
    </location>
</feature>
<feature type="glycosylation site" description="N-linked (GlcNAc...) asparagine" evidence="1">
    <location>
        <position position="87"/>
    </location>
</feature>
<name>PMTH_ARATH</name>
<accession>Q9SZX8</accession>
<keyword id="KW-0256">Endoplasmic reticulum</keyword>
<keyword id="KW-0325">Glycoprotein</keyword>
<keyword id="KW-0472">Membrane</keyword>
<keyword id="KW-0489">Methyltransferase</keyword>
<keyword id="KW-1185">Reference proteome</keyword>
<keyword id="KW-0735">Signal-anchor</keyword>
<keyword id="KW-0808">Transferase</keyword>
<keyword id="KW-0812">Transmembrane</keyword>
<keyword id="KW-1133">Transmembrane helix</keyword>
<evidence type="ECO:0000255" key="1"/>
<evidence type="ECO:0000256" key="2">
    <source>
        <dbReference type="SAM" id="MobiDB-lite"/>
    </source>
</evidence>
<evidence type="ECO:0000305" key="3"/>
<comment type="subcellular location">
    <subcellularLocation>
        <location evidence="3">Endoplasmic reticulum membrane</location>
        <topology evidence="3">Single-pass type II membrane protein</topology>
    </subcellularLocation>
</comment>
<comment type="similarity">
    <text evidence="3">Belongs to the methyltransferase superfamily.</text>
</comment>
<protein>
    <recommendedName>
        <fullName>Probable methyltransferase PMT17</fullName>
        <ecNumber>2.1.1.-</ecNumber>
    </recommendedName>
</protein>
<gene>
    <name type="ordered locus">At4g10440</name>
    <name type="ORF">F7L13.20</name>
</gene>
<reference key="1">
    <citation type="journal article" date="1999" name="Nature">
        <title>Sequence and analysis of chromosome 4 of the plant Arabidopsis thaliana.</title>
        <authorList>
            <person name="Mayer K.F.X."/>
            <person name="Schueller C."/>
            <person name="Wambutt R."/>
            <person name="Murphy G."/>
            <person name="Volckaert G."/>
            <person name="Pohl T."/>
            <person name="Duesterhoeft A."/>
            <person name="Stiekema W."/>
            <person name="Entian K.-D."/>
            <person name="Terryn N."/>
            <person name="Harris B."/>
            <person name="Ansorge W."/>
            <person name="Brandt P."/>
            <person name="Grivell L.A."/>
            <person name="Rieger M."/>
            <person name="Weichselgartner M."/>
            <person name="de Simone V."/>
            <person name="Obermaier B."/>
            <person name="Mache R."/>
            <person name="Mueller M."/>
            <person name="Kreis M."/>
            <person name="Delseny M."/>
            <person name="Puigdomenech P."/>
            <person name="Watson M."/>
            <person name="Schmidtheini T."/>
            <person name="Reichert B."/>
            <person name="Portetelle D."/>
            <person name="Perez-Alonso M."/>
            <person name="Boutry M."/>
            <person name="Bancroft I."/>
            <person name="Vos P."/>
            <person name="Hoheisel J."/>
            <person name="Zimmermann W."/>
            <person name="Wedler H."/>
            <person name="Ridley P."/>
            <person name="Langham S.-A."/>
            <person name="McCullagh B."/>
            <person name="Bilham L."/>
            <person name="Robben J."/>
            <person name="van der Schueren J."/>
            <person name="Grymonprez B."/>
            <person name="Chuang Y.-J."/>
            <person name="Vandenbussche F."/>
            <person name="Braeken M."/>
            <person name="Weltjens I."/>
            <person name="Voet M."/>
            <person name="Bastiaens I."/>
            <person name="Aert R."/>
            <person name="Defoor E."/>
            <person name="Weitzenegger T."/>
            <person name="Bothe G."/>
            <person name="Ramsperger U."/>
            <person name="Hilbert H."/>
            <person name="Braun M."/>
            <person name="Holzer E."/>
            <person name="Brandt A."/>
            <person name="Peters S."/>
            <person name="van Staveren M."/>
            <person name="Dirkse W."/>
            <person name="Mooijman P."/>
            <person name="Klein Lankhorst R."/>
            <person name="Rose M."/>
            <person name="Hauf J."/>
            <person name="Koetter P."/>
            <person name="Berneiser S."/>
            <person name="Hempel S."/>
            <person name="Feldpausch M."/>
            <person name="Lamberth S."/>
            <person name="Van den Daele H."/>
            <person name="De Keyser A."/>
            <person name="Buysshaert C."/>
            <person name="Gielen J."/>
            <person name="Villarroel R."/>
            <person name="De Clercq R."/>
            <person name="van Montagu M."/>
            <person name="Rogers J."/>
            <person name="Cronin A."/>
            <person name="Quail M.A."/>
            <person name="Bray-Allen S."/>
            <person name="Clark L."/>
            <person name="Doggett J."/>
            <person name="Hall S."/>
            <person name="Kay M."/>
            <person name="Lennard N."/>
            <person name="McLay K."/>
            <person name="Mayes R."/>
            <person name="Pettett A."/>
            <person name="Rajandream M.A."/>
            <person name="Lyne M."/>
            <person name="Benes V."/>
            <person name="Rechmann S."/>
            <person name="Borkova D."/>
            <person name="Bloecker H."/>
            <person name="Scharfe M."/>
            <person name="Grimm M."/>
            <person name="Loehnert T.-H."/>
            <person name="Dose S."/>
            <person name="de Haan M."/>
            <person name="Maarse A.C."/>
            <person name="Schaefer M."/>
            <person name="Mueller-Auer S."/>
            <person name="Gabel C."/>
            <person name="Fuchs M."/>
            <person name="Fartmann B."/>
            <person name="Granderath K."/>
            <person name="Dauner D."/>
            <person name="Herzl A."/>
            <person name="Neumann S."/>
            <person name="Argiriou A."/>
            <person name="Vitale D."/>
            <person name="Liguori R."/>
            <person name="Piravandi E."/>
            <person name="Massenet O."/>
            <person name="Quigley F."/>
            <person name="Clabauld G."/>
            <person name="Muendlein A."/>
            <person name="Felber R."/>
            <person name="Schnabl S."/>
            <person name="Hiller R."/>
            <person name="Schmidt W."/>
            <person name="Lecharny A."/>
            <person name="Aubourg S."/>
            <person name="Chefdor F."/>
            <person name="Cooke R."/>
            <person name="Berger C."/>
            <person name="Monfort A."/>
            <person name="Casacuberta E."/>
            <person name="Gibbons T."/>
            <person name="Weber N."/>
            <person name="Vandenbol M."/>
            <person name="Bargues M."/>
            <person name="Terol J."/>
            <person name="Torres A."/>
            <person name="Perez-Perez A."/>
            <person name="Purnelle B."/>
            <person name="Bent E."/>
            <person name="Johnson S."/>
            <person name="Tacon D."/>
            <person name="Jesse T."/>
            <person name="Heijnen L."/>
            <person name="Schwarz S."/>
            <person name="Scholler P."/>
            <person name="Heber S."/>
            <person name="Francs P."/>
            <person name="Bielke C."/>
            <person name="Frishman D."/>
            <person name="Haase D."/>
            <person name="Lemcke K."/>
            <person name="Mewes H.-W."/>
            <person name="Stocker S."/>
            <person name="Zaccaria P."/>
            <person name="Bevan M."/>
            <person name="Wilson R.K."/>
            <person name="de la Bastide M."/>
            <person name="Habermann K."/>
            <person name="Parnell L."/>
            <person name="Dedhia N."/>
            <person name="Gnoj L."/>
            <person name="Schutz K."/>
            <person name="Huang E."/>
            <person name="Spiegel L."/>
            <person name="Sekhon M."/>
            <person name="Murray J."/>
            <person name="Sheet P."/>
            <person name="Cordes M."/>
            <person name="Abu-Threideh J."/>
            <person name="Stoneking T."/>
            <person name="Kalicki J."/>
            <person name="Graves T."/>
            <person name="Harmon G."/>
            <person name="Edwards J."/>
            <person name="Latreille P."/>
            <person name="Courtney L."/>
            <person name="Cloud J."/>
            <person name="Abbott A."/>
            <person name="Scott K."/>
            <person name="Johnson D."/>
            <person name="Minx P."/>
            <person name="Bentley D."/>
            <person name="Fulton B."/>
            <person name="Miller N."/>
            <person name="Greco T."/>
            <person name="Kemp K."/>
            <person name="Kramer J."/>
            <person name="Fulton L."/>
            <person name="Mardis E."/>
            <person name="Dante M."/>
            <person name="Pepin K."/>
            <person name="Hillier L.W."/>
            <person name="Nelson J."/>
            <person name="Spieth J."/>
            <person name="Ryan E."/>
            <person name="Andrews S."/>
            <person name="Geisel C."/>
            <person name="Layman D."/>
            <person name="Du H."/>
            <person name="Ali J."/>
            <person name="Berghoff A."/>
            <person name="Jones K."/>
            <person name="Drone K."/>
            <person name="Cotton M."/>
            <person name="Joshu C."/>
            <person name="Antonoiu B."/>
            <person name="Zidanic M."/>
            <person name="Strong C."/>
            <person name="Sun H."/>
            <person name="Lamar B."/>
            <person name="Yordan C."/>
            <person name="Ma P."/>
            <person name="Zhong J."/>
            <person name="Preston R."/>
            <person name="Vil D."/>
            <person name="Shekher M."/>
            <person name="Matero A."/>
            <person name="Shah R."/>
            <person name="Swaby I.K."/>
            <person name="O'Shaughnessy A."/>
            <person name="Rodriguez M."/>
            <person name="Hoffman J."/>
            <person name="Till S."/>
            <person name="Granat S."/>
            <person name="Shohdy N."/>
            <person name="Hasegawa A."/>
            <person name="Hameed A."/>
            <person name="Lodhi M."/>
            <person name="Johnson A."/>
            <person name="Chen E."/>
            <person name="Marra M.A."/>
            <person name="Martienssen R."/>
            <person name="McCombie W.R."/>
        </authorList>
    </citation>
    <scope>NUCLEOTIDE SEQUENCE [LARGE SCALE GENOMIC DNA]</scope>
    <source>
        <strain>cv. Columbia</strain>
    </source>
</reference>
<reference key="2">
    <citation type="journal article" date="2017" name="Plant J.">
        <title>Araport11: a complete reannotation of the Arabidopsis thaliana reference genome.</title>
        <authorList>
            <person name="Cheng C.Y."/>
            <person name="Krishnakumar V."/>
            <person name="Chan A.P."/>
            <person name="Thibaud-Nissen F."/>
            <person name="Schobel S."/>
            <person name="Town C.D."/>
        </authorList>
    </citation>
    <scope>GENOME REANNOTATION</scope>
    <source>
        <strain>cv. Columbia</strain>
    </source>
</reference>
<reference key="3">
    <citation type="journal article" date="2007" name="Plant J.">
        <title>The TUMOROUS SHOOT DEVELOPMENT2 gene of Arabidopsis encoding a putative methyltransferase is required for cell adhesion and co-ordinated plant development.</title>
        <authorList>
            <person name="Krupkova E."/>
            <person name="Immerzeel P."/>
            <person name="Pauly M."/>
            <person name="Schmulling T."/>
        </authorList>
    </citation>
    <scope>GENE FAMILY</scope>
</reference>